<accession>Q2KKX7</accession>
<evidence type="ECO:0000255" key="1"/>
<evidence type="ECO:0000305" key="2"/>
<feature type="signal peptide" evidence="1">
    <location>
        <begin position="1"/>
        <end position="17"/>
    </location>
</feature>
<feature type="chain" id="PRO_0000342617" description="Small integral membrane protein 7">
    <location>
        <begin position="18"/>
        <end position="75"/>
    </location>
</feature>
<feature type="topological domain" description="Extracellular" evidence="1">
    <location>
        <begin position="18"/>
        <end position="53"/>
    </location>
</feature>
<feature type="transmembrane region" description="Helical" evidence="1">
    <location>
        <begin position="54"/>
        <end position="74"/>
    </location>
</feature>
<feature type="topological domain" description="Cytoplasmic" evidence="1">
    <location>
        <position position="75"/>
    </location>
</feature>
<protein>
    <recommendedName>
        <fullName>Small integral membrane protein 7</fullName>
    </recommendedName>
</protein>
<keyword id="KW-0472">Membrane</keyword>
<keyword id="KW-0732">Signal</keyword>
<keyword id="KW-0812">Transmembrane</keyword>
<keyword id="KW-1133">Transmembrane helix</keyword>
<organism>
    <name type="scientific">Siniperca chuatsi</name>
    <name type="common">Mandarin fish</name>
    <dbReference type="NCBI Taxonomy" id="119488"/>
    <lineage>
        <taxon>Eukaryota</taxon>
        <taxon>Metazoa</taxon>
        <taxon>Chordata</taxon>
        <taxon>Craniata</taxon>
        <taxon>Vertebrata</taxon>
        <taxon>Euteleostomi</taxon>
        <taxon>Actinopterygii</taxon>
        <taxon>Neopterygii</taxon>
        <taxon>Teleostei</taxon>
        <taxon>Neoteleostei</taxon>
        <taxon>Acanthomorphata</taxon>
        <taxon>Eupercaria</taxon>
        <taxon>Centrarchiformes</taxon>
        <taxon>Centrarchoidei</taxon>
        <taxon>Sinipercidae</taxon>
        <taxon>Siniperca</taxon>
    </lineage>
</organism>
<dbReference type="EMBL" id="AY909441">
    <property type="protein sequence ID" value="AAY79249.1"/>
    <property type="molecule type" value="mRNA"/>
</dbReference>
<dbReference type="GO" id="GO:0016020">
    <property type="term" value="C:membrane"/>
    <property type="evidence" value="ECO:0007669"/>
    <property type="project" value="UniProtKB-SubCell"/>
</dbReference>
<dbReference type="InterPro" id="IPR037659">
    <property type="entry name" value="SMIM7"/>
</dbReference>
<dbReference type="PANTHER" id="PTHR28622">
    <property type="entry name" value="SMALL INTEGRAL MEMBRANE PROTEIN 7"/>
    <property type="match status" value="1"/>
</dbReference>
<dbReference type="PANTHER" id="PTHR28622:SF1">
    <property type="entry name" value="SMALL INTEGRAL MEMBRANE PROTEIN 7"/>
    <property type="match status" value="1"/>
</dbReference>
<reference key="1">
    <citation type="journal article" date="2006" name="Dis. Aquat. Organ.">
        <title>Differential gene expression profile in spleen of mandarin fish Siniperca chuatsi infected with ISKNV, derived from suppression subtractive hybridization.</title>
        <authorList>
            <person name="He W."/>
            <person name="Yinlt Z.X."/>
            <person name="Li Y."/>
            <person name="Huo W.L."/>
            <person name="Guan H.J."/>
            <person name="Weng S.P."/>
            <person name="Chan S.M."/>
            <person name="He J.G."/>
        </authorList>
    </citation>
    <scope>NUCLEOTIDE SEQUENCE [MRNA]</scope>
</reference>
<proteinExistence type="inferred from homology"/>
<gene>
    <name type="primary">smim7</name>
</gene>
<sequence>MIGDLLIFGTLLVNAGAVLNFKLKRKESQGFGDESRAPATGDNIREFLLSLRYFRVFIALWNIFIMFCMIVLFGS</sequence>
<comment type="subcellular location">
    <subcellularLocation>
        <location evidence="2">Membrane</location>
        <topology evidence="2">Single-pass type I membrane protein</topology>
    </subcellularLocation>
</comment>
<comment type="similarity">
    <text evidence="2">Belongs to the SMIM7 family.</text>
</comment>
<name>SMIM7_SINCH</name>